<gene>
    <name type="primary">Dek</name>
</gene>
<accession>Q7TNV0</accession>
<accession>Q80VC5</accession>
<accession>Q8BZV6</accession>
<organism>
    <name type="scientific">Mus musculus</name>
    <name type="common">Mouse</name>
    <dbReference type="NCBI Taxonomy" id="10090"/>
    <lineage>
        <taxon>Eukaryota</taxon>
        <taxon>Metazoa</taxon>
        <taxon>Chordata</taxon>
        <taxon>Craniata</taxon>
        <taxon>Vertebrata</taxon>
        <taxon>Euteleostomi</taxon>
        <taxon>Mammalia</taxon>
        <taxon>Eutheria</taxon>
        <taxon>Euarchontoglires</taxon>
        <taxon>Glires</taxon>
        <taxon>Rodentia</taxon>
        <taxon>Myomorpha</taxon>
        <taxon>Muroidea</taxon>
        <taxon>Muridae</taxon>
        <taxon>Murinae</taxon>
        <taxon>Mus</taxon>
        <taxon>Mus</taxon>
    </lineage>
</organism>
<proteinExistence type="evidence at protein level"/>
<dbReference type="EMBL" id="AK033451">
    <property type="protein sequence ID" value="BAC28296.1"/>
    <property type="molecule type" value="mRNA"/>
</dbReference>
<dbReference type="EMBL" id="BC048844">
    <property type="protein sequence ID" value="AAH48844.1"/>
    <property type="molecule type" value="mRNA"/>
</dbReference>
<dbReference type="EMBL" id="BC055451">
    <property type="protein sequence ID" value="AAH55451.1"/>
    <property type="molecule type" value="mRNA"/>
</dbReference>
<dbReference type="CCDS" id="CCDS26490.1"/>
<dbReference type="RefSeq" id="NP_080176.2">
    <property type="nucleotide sequence ID" value="NM_025900.2"/>
</dbReference>
<dbReference type="RefSeq" id="XP_036013726.1">
    <property type="nucleotide sequence ID" value="XM_036157833.1"/>
</dbReference>
<dbReference type="SMR" id="Q7TNV0"/>
<dbReference type="BioGRID" id="225256">
    <property type="interactions" value="13"/>
</dbReference>
<dbReference type="ComplexPortal" id="CPX-1133">
    <property type="entry name" value="B-WICH chromatin remodelling complex"/>
</dbReference>
<dbReference type="FunCoup" id="Q7TNV0">
    <property type="interactions" value="3554"/>
</dbReference>
<dbReference type="IntAct" id="Q7TNV0">
    <property type="interactions" value="3"/>
</dbReference>
<dbReference type="MINT" id="Q7TNV0"/>
<dbReference type="STRING" id="10090.ENSMUSP00000021807"/>
<dbReference type="GlyGen" id="Q7TNV0">
    <property type="glycosylation" value="1 site, 1 O-linked glycan (1 site)"/>
</dbReference>
<dbReference type="iPTMnet" id="Q7TNV0"/>
<dbReference type="PhosphoSitePlus" id="Q7TNV0"/>
<dbReference type="SwissPalm" id="Q7TNV0"/>
<dbReference type="CPTAC" id="non-CPTAC-3786"/>
<dbReference type="jPOST" id="Q7TNV0"/>
<dbReference type="PaxDb" id="10090-ENSMUSP00000021807"/>
<dbReference type="PeptideAtlas" id="Q7TNV0"/>
<dbReference type="ProteomicsDB" id="279338"/>
<dbReference type="Pumba" id="Q7TNV0"/>
<dbReference type="Antibodypedia" id="4456">
    <property type="antibodies" value="298 antibodies from 37 providers"/>
</dbReference>
<dbReference type="DNASU" id="110052"/>
<dbReference type="Ensembl" id="ENSMUST00000021807.13">
    <property type="protein sequence ID" value="ENSMUSP00000021807.7"/>
    <property type="gene ID" value="ENSMUSG00000021377.16"/>
</dbReference>
<dbReference type="GeneID" id="110052"/>
<dbReference type="KEGG" id="mmu:110052"/>
<dbReference type="UCSC" id="uc007qhw.2">
    <property type="organism name" value="mouse"/>
</dbReference>
<dbReference type="AGR" id="MGI:1926209"/>
<dbReference type="CTD" id="7913"/>
<dbReference type="MGI" id="MGI:1926209">
    <property type="gene designation" value="Dek"/>
</dbReference>
<dbReference type="VEuPathDB" id="HostDB:ENSMUSG00000021377"/>
<dbReference type="eggNOG" id="KOG2266">
    <property type="taxonomic scope" value="Eukaryota"/>
</dbReference>
<dbReference type="GeneTree" id="ENSGT00390000017282"/>
<dbReference type="HOGENOM" id="CLU_041060_0_1_1"/>
<dbReference type="InParanoid" id="Q7TNV0"/>
<dbReference type="OMA" id="MIKKAPT"/>
<dbReference type="OrthoDB" id="370884at2759"/>
<dbReference type="PhylomeDB" id="Q7TNV0"/>
<dbReference type="TreeFam" id="TF324696"/>
<dbReference type="Reactome" id="R-MMU-5250924">
    <property type="pathway name" value="B-WICH complex positively regulates rRNA expression"/>
</dbReference>
<dbReference type="Reactome" id="R-MMU-8864260">
    <property type="pathway name" value="Transcriptional regulation by the AP-2 (TFAP2) family of transcription factors"/>
</dbReference>
<dbReference type="BioGRID-ORCS" id="110052">
    <property type="hits" value="7 hits in 117 CRISPR screens"/>
</dbReference>
<dbReference type="ChiTaRS" id="Dek">
    <property type="organism name" value="mouse"/>
</dbReference>
<dbReference type="PRO" id="PR:Q7TNV0"/>
<dbReference type="Proteomes" id="UP000000589">
    <property type="component" value="Chromosome 13"/>
</dbReference>
<dbReference type="RNAct" id="Q7TNV0">
    <property type="molecule type" value="protein"/>
</dbReference>
<dbReference type="Bgee" id="ENSMUSG00000021377">
    <property type="expression patterns" value="Expressed in embryonic post-anal tail and 74 other cell types or tissues"/>
</dbReference>
<dbReference type="ExpressionAtlas" id="Q7TNV0">
    <property type="expression patterns" value="baseline and differential"/>
</dbReference>
<dbReference type="GO" id="GO:0110016">
    <property type="term" value="C:B-WICH complex"/>
    <property type="evidence" value="ECO:0000266"/>
    <property type="project" value="ComplexPortal"/>
</dbReference>
<dbReference type="GO" id="GO:0043292">
    <property type="term" value="C:contractile muscle fiber"/>
    <property type="evidence" value="ECO:0000314"/>
    <property type="project" value="MGI"/>
</dbReference>
<dbReference type="GO" id="GO:0005730">
    <property type="term" value="C:nucleolus"/>
    <property type="evidence" value="ECO:0000303"/>
    <property type="project" value="ComplexPortal"/>
</dbReference>
<dbReference type="GO" id="GO:0005654">
    <property type="term" value="C:nucleoplasm"/>
    <property type="evidence" value="ECO:0007669"/>
    <property type="project" value="Ensembl"/>
</dbReference>
<dbReference type="GO" id="GO:0005634">
    <property type="term" value="C:nucleus"/>
    <property type="evidence" value="ECO:0000314"/>
    <property type="project" value="MGI"/>
</dbReference>
<dbReference type="GO" id="GO:0003677">
    <property type="term" value="F:DNA binding"/>
    <property type="evidence" value="ECO:0007669"/>
    <property type="project" value="UniProtKB-KW"/>
</dbReference>
<dbReference type="GO" id="GO:0042393">
    <property type="term" value="F:histone binding"/>
    <property type="evidence" value="ECO:0007669"/>
    <property type="project" value="Ensembl"/>
</dbReference>
<dbReference type="GO" id="GO:0006338">
    <property type="term" value="P:chromatin remodeling"/>
    <property type="evidence" value="ECO:0000303"/>
    <property type="project" value="ComplexPortal"/>
</dbReference>
<dbReference type="GO" id="GO:0045943">
    <property type="term" value="P:positive regulation of transcription by RNA polymerase I"/>
    <property type="evidence" value="ECO:0000303"/>
    <property type="project" value="ComplexPortal"/>
</dbReference>
<dbReference type="GO" id="GO:0045944">
    <property type="term" value="P:positive regulation of transcription by RNA polymerase II"/>
    <property type="evidence" value="ECO:0000303"/>
    <property type="project" value="ComplexPortal"/>
</dbReference>
<dbReference type="GO" id="GO:0045945">
    <property type="term" value="P:positive regulation of transcription by RNA polymerase III"/>
    <property type="evidence" value="ECO:0000266"/>
    <property type="project" value="ComplexPortal"/>
</dbReference>
<dbReference type="GO" id="GO:2000779">
    <property type="term" value="P:regulation of double-strand break repair"/>
    <property type="evidence" value="ECO:0000266"/>
    <property type="project" value="MGI"/>
</dbReference>
<dbReference type="GO" id="GO:2001032">
    <property type="term" value="P:regulation of double-strand break repair via nonhomologous end joining"/>
    <property type="evidence" value="ECO:0000315"/>
    <property type="project" value="MGI"/>
</dbReference>
<dbReference type="FunFam" id="1.10.10.60:FF:000148">
    <property type="entry name" value="Dek, isoform B"/>
    <property type="match status" value="1"/>
</dbReference>
<dbReference type="Gene3D" id="1.10.10.60">
    <property type="entry name" value="Homeodomain-like"/>
    <property type="match status" value="1"/>
</dbReference>
<dbReference type="InterPro" id="IPR044198">
    <property type="entry name" value="DEK"/>
</dbReference>
<dbReference type="InterPro" id="IPR014876">
    <property type="entry name" value="DEK_C"/>
</dbReference>
<dbReference type="InterPro" id="IPR003034">
    <property type="entry name" value="SAP_dom"/>
</dbReference>
<dbReference type="PANTHER" id="PTHR13468">
    <property type="entry name" value="DEK PROTEIN"/>
    <property type="match status" value="1"/>
</dbReference>
<dbReference type="PANTHER" id="PTHR13468:SF1">
    <property type="entry name" value="PROTEIN DEK"/>
    <property type="match status" value="1"/>
</dbReference>
<dbReference type="Pfam" id="PF08766">
    <property type="entry name" value="DEK_C"/>
    <property type="match status" value="1"/>
</dbReference>
<dbReference type="Pfam" id="PF02037">
    <property type="entry name" value="SAP"/>
    <property type="match status" value="1"/>
</dbReference>
<dbReference type="SMART" id="SM00513">
    <property type="entry name" value="SAP"/>
    <property type="match status" value="1"/>
</dbReference>
<dbReference type="SUPFAM" id="SSF109715">
    <property type="entry name" value="DEK C-terminal domain"/>
    <property type="match status" value="1"/>
</dbReference>
<dbReference type="PROSITE" id="PS51998">
    <property type="entry name" value="DEK_C"/>
    <property type="match status" value="1"/>
</dbReference>
<reference key="1">
    <citation type="journal article" date="2005" name="Science">
        <title>The transcriptional landscape of the mammalian genome.</title>
        <authorList>
            <person name="Carninci P."/>
            <person name="Kasukawa T."/>
            <person name="Katayama S."/>
            <person name="Gough J."/>
            <person name="Frith M.C."/>
            <person name="Maeda N."/>
            <person name="Oyama R."/>
            <person name="Ravasi T."/>
            <person name="Lenhard B."/>
            <person name="Wells C."/>
            <person name="Kodzius R."/>
            <person name="Shimokawa K."/>
            <person name="Bajic V.B."/>
            <person name="Brenner S.E."/>
            <person name="Batalov S."/>
            <person name="Forrest A.R."/>
            <person name="Zavolan M."/>
            <person name="Davis M.J."/>
            <person name="Wilming L.G."/>
            <person name="Aidinis V."/>
            <person name="Allen J.E."/>
            <person name="Ambesi-Impiombato A."/>
            <person name="Apweiler R."/>
            <person name="Aturaliya R.N."/>
            <person name="Bailey T.L."/>
            <person name="Bansal M."/>
            <person name="Baxter L."/>
            <person name="Beisel K.W."/>
            <person name="Bersano T."/>
            <person name="Bono H."/>
            <person name="Chalk A.M."/>
            <person name="Chiu K.P."/>
            <person name="Choudhary V."/>
            <person name="Christoffels A."/>
            <person name="Clutterbuck D.R."/>
            <person name="Crowe M.L."/>
            <person name="Dalla E."/>
            <person name="Dalrymple B.P."/>
            <person name="de Bono B."/>
            <person name="Della Gatta G."/>
            <person name="di Bernardo D."/>
            <person name="Down T."/>
            <person name="Engstrom P."/>
            <person name="Fagiolini M."/>
            <person name="Faulkner G."/>
            <person name="Fletcher C.F."/>
            <person name="Fukushima T."/>
            <person name="Furuno M."/>
            <person name="Futaki S."/>
            <person name="Gariboldi M."/>
            <person name="Georgii-Hemming P."/>
            <person name="Gingeras T.R."/>
            <person name="Gojobori T."/>
            <person name="Green R.E."/>
            <person name="Gustincich S."/>
            <person name="Harbers M."/>
            <person name="Hayashi Y."/>
            <person name="Hensch T.K."/>
            <person name="Hirokawa N."/>
            <person name="Hill D."/>
            <person name="Huminiecki L."/>
            <person name="Iacono M."/>
            <person name="Ikeo K."/>
            <person name="Iwama A."/>
            <person name="Ishikawa T."/>
            <person name="Jakt M."/>
            <person name="Kanapin A."/>
            <person name="Katoh M."/>
            <person name="Kawasawa Y."/>
            <person name="Kelso J."/>
            <person name="Kitamura H."/>
            <person name="Kitano H."/>
            <person name="Kollias G."/>
            <person name="Krishnan S.P."/>
            <person name="Kruger A."/>
            <person name="Kummerfeld S.K."/>
            <person name="Kurochkin I.V."/>
            <person name="Lareau L.F."/>
            <person name="Lazarevic D."/>
            <person name="Lipovich L."/>
            <person name="Liu J."/>
            <person name="Liuni S."/>
            <person name="McWilliam S."/>
            <person name="Madan Babu M."/>
            <person name="Madera M."/>
            <person name="Marchionni L."/>
            <person name="Matsuda H."/>
            <person name="Matsuzawa S."/>
            <person name="Miki H."/>
            <person name="Mignone F."/>
            <person name="Miyake S."/>
            <person name="Morris K."/>
            <person name="Mottagui-Tabar S."/>
            <person name="Mulder N."/>
            <person name="Nakano N."/>
            <person name="Nakauchi H."/>
            <person name="Ng P."/>
            <person name="Nilsson R."/>
            <person name="Nishiguchi S."/>
            <person name="Nishikawa S."/>
            <person name="Nori F."/>
            <person name="Ohara O."/>
            <person name="Okazaki Y."/>
            <person name="Orlando V."/>
            <person name="Pang K.C."/>
            <person name="Pavan W.J."/>
            <person name="Pavesi G."/>
            <person name="Pesole G."/>
            <person name="Petrovsky N."/>
            <person name="Piazza S."/>
            <person name="Reed J."/>
            <person name="Reid J.F."/>
            <person name="Ring B.Z."/>
            <person name="Ringwald M."/>
            <person name="Rost B."/>
            <person name="Ruan Y."/>
            <person name="Salzberg S.L."/>
            <person name="Sandelin A."/>
            <person name="Schneider C."/>
            <person name="Schoenbach C."/>
            <person name="Sekiguchi K."/>
            <person name="Semple C.A."/>
            <person name="Seno S."/>
            <person name="Sessa L."/>
            <person name="Sheng Y."/>
            <person name="Shibata Y."/>
            <person name="Shimada H."/>
            <person name="Shimada K."/>
            <person name="Silva D."/>
            <person name="Sinclair B."/>
            <person name="Sperling S."/>
            <person name="Stupka E."/>
            <person name="Sugiura K."/>
            <person name="Sultana R."/>
            <person name="Takenaka Y."/>
            <person name="Taki K."/>
            <person name="Tammoja K."/>
            <person name="Tan S.L."/>
            <person name="Tang S."/>
            <person name="Taylor M.S."/>
            <person name="Tegner J."/>
            <person name="Teichmann S.A."/>
            <person name="Ueda H.R."/>
            <person name="van Nimwegen E."/>
            <person name="Verardo R."/>
            <person name="Wei C.L."/>
            <person name="Yagi K."/>
            <person name="Yamanishi H."/>
            <person name="Zabarovsky E."/>
            <person name="Zhu S."/>
            <person name="Zimmer A."/>
            <person name="Hide W."/>
            <person name="Bult C."/>
            <person name="Grimmond S.M."/>
            <person name="Teasdale R.D."/>
            <person name="Liu E.T."/>
            <person name="Brusic V."/>
            <person name="Quackenbush J."/>
            <person name="Wahlestedt C."/>
            <person name="Mattick J.S."/>
            <person name="Hume D.A."/>
            <person name="Kai C."/>
            <person name="Sasaki D."/>
            <person name="Tomaru Y."/>
            <person name="Fukuda S."/>
            <person name="Kanamori-Katayama M."/>
            <person name="Suzuki M."/>
            <person name="Aoki J."/>
            <person name="Arakawa T."/>
            <person name="Iida J."/>
            <person name="Imamura K."/>
            <person name="Itoh M."/>
            <person name="Kato T."/>
            <person name="Kawaji H."/>
            <person name="Kawagashira N."/>
            <person name="Kawashima T."/>
            <person name="Kojima M."/>
            <person name="Kondo S."/>
            <person name="Konno H."/>
            <person name="Nakano K."/>
            <person name="Ninomiya N."/>
            <person name="Nishio T."/>
            <person name="Okada M."/>
            <person name="Plessy C."/>
            <person name="Shibata K."/>
            <person name="Shiraki T."/>
            <person name="Suzuki S."/>
            <person name="Tagami M."/>
            <person name="Waki K."/>
            <person name="Watahiki A."/>
            <person name="Okamura-Oho Y."/>
            <person name="Suzuki H."/>
            <person name="Kawai J."/>
            <person name="Hayashizaki Y."/>
        </authorList>
    </citation>
    <scope>NUCLEOTIDE SEQUENCE [LARGE SCALE MRNA]</scope>
    <source>
        <strain>C57BL/6J</strain>
        <tissue>Colon</tissue>
    </source>
</reference>
<reference key="2">
    <citation type="journal article" date="2004" name="Genome Res.">
        <title>The status, quality, and expansion of the NIH full-length cDNA project: the Mammalian Gene Collection (MGC).</title>
        <authorList>
            <consortium name="The MGC Project Team"/>
        </authorList>
    </citation>
    <scope>NUCLEOTIDE SEQUENCE [LARGE SCALE MRNA]</scope>
    <source>
        <strain>FVB/N</strain>
        <tissue>Mammary gland</tissue>
        <tissue>Salivary gland</tissue>
    </source>
</reference>
<reference key="3">
    <citation type="journal article" date="2007" name="Biochem. Biophys. Res. Commun.">
        <title>The distribution of the DEK protein in mammalian chromatin.</title>
        <authorList>
            <person name="Hu H.G."/>
            <person name="Scholten I."/>
            <person name="Gruss C."/>
            <person name="Knippers R."/>
        </authorList>
    </citation>
    <scope>FUNCTION</scope>
    <scope>SUBCELLULAR LOCATION</scope>
</reference>
<reference key="4">
    <citation type="journal article" date="2007" name="Proc. Natl. Acad. Sci. U.S.A.">
        <title>Large-scale phosphorylation analysis of mouse liver.</title>
        <authorList>
            <person name="Villen J."/>
            <person name="Beausoleil S.A."/>
            <person name="Gerber S.A."/>
            <person name="Gygi S.P."/>
        </authorList>
    </citation>
    <scope>PHOSPHORYLATION [LARGE SCALE ANALYSIS] AT SER-33</scope>
    <scope>IDENTIFICATION BY MASS SPECTROMETRY [LARGE SCALE ANALYSIS]</scope>
    <source>
        <tissue>Liver</tissue>
    </source>
</reference>
<reference key="5">
    <citation type="journal article" date="2008" name="J. Proteome Res.">
        <title>Specific phosphopeptide enrichment with immobilized titanium ion affinity chromatography adsorbent for phosphoproteome analysis.</title>
        <authorList>
            <person name="Zhou H."/>
            <person name="Ye M."/>
            <person name="Dong J."/>
            <person name="Han G."/>
            <person name="Jiang X."/>
            <person name="Wu R."/>
            <person name="Zou H."/>
        </authorList>
    </citation>
    <scope>IDENTIFICATION BY MASS SPECTROMETRY [LARGE SCALE ANALYSIS]</scope>
    <source>
        <tissue>Liver</tissue>
    </source>
</reference>
<reference key="6">
    <citation type="journal article" date="2010" name="Cell">
        <title>A tissue-specific atlas of mouse protein phosphorylation and expression.</title>
        <authorList>
            <person name="Huttlin E.L."/>
            <person name="Jedrychowski M.P."/>
            <person name="Elias J.E."/>
            <person name="Goswami T."/>
            <person name="Rad R."/>
            <person name="Beausoleil S.A."/>
            <person name="Villen J."/>
            <person name="Haas W."/>
            <person name="Sowa M.E."/>
            <person name="Gygi S.P."/>
        </authorList>
    </citation>
    <scope>PHOSPHORYLATION [LARGE SCALE ANALYSIS] AT SER-33</scope>
    <scope>IDENTIFICATION BY MASS SPECTROMETRY [LARGE SCALE ANALYSIS]</scope>
    <source>
        <tissue>Brain</tissue>
        <tissue>Brown adipose tissue</tissue>
        <tissue>Heart</tissue>
        <tissue>Kidney</tissue>
        <tissue>Liver</tissue>
        <tissue>Lung</tissue>
        <tissue>Pancreas</tissue>
        <tissue>Spleen</tissue>
        <tissue>Testis</tissue>
    </source>
</reference>
<name>DEK_MOUSE</name>
<feature type="chain" id="PRO_0000079859" description="Protein DEK">
    <location>
        <begin position="1"/>
        <end position="380"/>
    </location>
</feature>
<feature type="domain" description="SAP">
    <location>
        <begin position="153"/>
        <end position="187"/>
    </location>
</feature>
<feature type="domain" description="DEK-C" evidence="4">
    <location>
        <begin position="324"/>
        <end position="380"/>
    </location>
</feature>
<feature type="DNA-binding region" evidence="1">
    <location>
        <begin position="342"/>
        <end position="356"/>
    </location>
</feature>
<feature type="DNA-binding region" evidence="1">
    <location>
        <begin position="372"/>
        <end position="376"/>
    </location>
</feature>
<feature type="region of interest" description="Disordered" evidence="5">
    <location>
        <begin position="1"/>
        <end position="67"/>
    </location>
</feature>
<feature type="region of interest" description="Disordered" evidence="5">
    <location>
        <begin position="188"/>
        <end position="330"/>
    </location>
</feature>
<feature type="short sequence motif" description="Nuclear localization signal" evidence="3">
    <location>
        <begin position="209"/>
        <end position="225"/>
    </location>
</feature>
<feature type="compositionally biased region" description="Basic and acidic residues" evidence="5">
    <location>
        <begin position="20"/>
        <end position="31"/>
    </location>
</feature>
<feature type="compositionally biased region" description="Acidic residues" evidence="5">
    <location>
        <begin position="32"/>
        <end position="51"/>
    </location>
</feature>
<feature type="compositionally biased region" description="Basic and acidic residues" evidence="5">
    <location>
        <begin position="52"/>
        <end position="67"/>
    </location>
</feature>
<feature type="compositionally biased region" description="Basic residues" evidence="5">
    <location>
        <begin position="198"/>
        <end position="207"/>
    </location>
</feature>
<feature type="compositionally biased region" description="Acidic residues" evidence="5">
    <location>
        <begin position="247"/>
        <end position="258"/>
    </location>
</feature>
<feature type="compositionally biased region" description="Basic residues" evidence="5">
    <location>
        <begin position="263"/>
        <end position="282"/>
    </location>
</feature>
<feature type="compositionally biased region" description="Low complexity" evidence="5">
    <location>
        <begin position="283"/>
        <end position="296"/>
    </location>
</feature>
<feature type="modified residue" description="Phosphoserine" evidence="2">
    <location>
        <position position="20"/>
    </location>
</feature>
<feature type="modified residue" description="Phosphoserine" evidence="8 9">
    <location>
        <position position="33"/>
    </location>
</feature>
<feature type="modified residue" description="Phosphoserine" evidence="2">
    <location>
        <position position="55"/>
    </location>
</feature>
<feature type="modified residue" description="Phosphoserine" evidence="2">
    <location>
        <position position="76"/>
    </location>
</feature>
<feature type="modified residue" description="Phosphoserine" evidence="2">
    <location>
        <position position="125"/>
    </location>
</feature>
<feature type="modified residue" description="Phosphoserine" evidence="2">
    <location>
        <position position="126"/>
    </location>
</feature>
<feature type="modified residue" description="Phosphoserine" evidence="2">
    <location>
        <position position="163"/>
    </location>
</feature>
<feature type="modified residue" description="Phosphoserine" evidence="2">
    <location>
        <position position="205"/>
    </location>
</feature>
<feature type="modified residue" description="Phosphoserine" evidence="2">
    <location>
        <position position="208"/>
    </location>
</feature>
<feature type="modified residue" description="Phosphoserine" evidence="2">
    <location>
        <position position="214"/>
    </location>
</feature>
<feature type="modified residue" description="Phosphoserine" evidence="2">
    <location>
        <position position="231"/>
    </location>
</feature>
<feature type="modified residue" description="Phosphoserine" evidence="2">
    <location>
        <position position="234"/>
    </location>
</feature>
<feature type="modified residue" description="Phosphoserine" evidence="2">
    <location>
        <position position="235"/>
    </location>
</feature>
<feature type="modified residue" description="Phosphoserine" evidence="2">
    <location>
        <position position="236"/>
    </location>
</feature>
<feature type="modified residue" description="Phosphoserine" evidence="2">
    <location>
        <position position="247"/>
    </location>
</feature>
<feature type="modified residue" description="Phosphoserine" evidence="2">
    <location>
        <position position="248"/>
    </location>
</feature>
<feature type="modified residue" description="Phosphoserine" evidence="2">
    <location>
        <position position="255"/>
    </location>
</feature>
<feature type="modified residue" description="ADP-ribosylserine" evidence="2">
    <location>
        <position position="284"/>
    </location>
</feature>
<feature type="modified residue" description="Phosphoserine" evidence="2">
    <location>
        <position position="292"/>
    </location>
</feature>
<feature type="modified residue" description="Phosphoserine" evidence="2">
    <location>
        <position position="293"/>
    </location>
</feature>
<feature type="modified residue" description="Phosphothreonine" evidence="2">
    <location>
        <position position="294"/>
    </location>
</feature>
<feature type="modified residue" description="Phosphothreonine" evidence="2">
    <location>
        <position position="295"/>
    </location>
</feature>
<feature type="modified residue" description="Phosphoserine" evidence="2">
    <location>
        <position position="301"/>
    </location>
</feature>
<feature type="modified residue" description="Phosphoserine" evidence="2">
    <location>
        <position position="306"/>
    </location>
</feature>
<feature type="modified residue" description="Phosphoserine" evidence="2">
    <location>
        <position position="308"/>
    </location>
</feature>
<feature type="modified residue" description="Phosphoserine" evidence="2">
    <location>
        <position position="311"/>
    </location>
</feature>
<feature type="modified residue" description="Phosphoserine" evidence="2">
    <location>
        <position position="312"/>
    </location>
</feature>
<feature type="sequence conflict" description="In Ref. 2; AAH48844." evidence="7" ref="2">
    <original>R</original>
    <variation>S</variation>
    <location>
        <position position="97"/>
    </location>
</feature>
<feature type="sequence conflict" description="In Ref. 1; BAC28296." evidence="7" ref="1">
    <original>Y</original>
    <variation>C</variation>
    <location>
        <position position="362"/>
    </location>
</feature>
<evidence type="ECO:0000250" key="1"/>
<evidence type="ECO:0000250" key="2">
    <source>
        <dbReference type="UniProtKB" id="P35659"/>
    </source>
</evidence>
<evidence type="ECO:0000255" key="3"/>
<evidence type="ECO:0000255" key="4">
    <source>
        <dbReference type="PROSITE-ProRule" id="PRU01342"/>
    </source>
</evidence>
<evidence type="ECO:0000256" key="5">
    <source>
        <dbReference type="SAM" id="MobiDB-lite"/>
    </source>
</evidence>
<evidence type="ECO:0000269" key="6">
    <source>
    </source>
</evidence>
<evidence type="ECO:0000305" key="7"/>
<evidence type="ECO:0007744" key="8">
    <source>
    </source>
</evidence>
<evidence type="ECO:0007744" key="9">
    <source>
    </source>
</evidence>
<keyword id="KW-0013">ADP-ribosylation</keyword>
<keyword id="KW-0156">Chromatin regulator</keyword>
<keyword id="KW-0238">DNA-binding</keyword>
<keyword id="KW-0539">Nucleus</keyword>
<keyword id="KW-0597">Phosphoprotein</keyword>
<keyword id="KW-1185">Reference proteome</keyword>
<protein>
    <recommendedName>
        <fullName>Protein DEK</fullName>
    </recommendedName>
</protein>
<sequence>MSAAAAPAAEGEDAPVPPSSEKEPEMPGPREESEEEEEDDEDDDEEDEEEEKEKSLIVEGKREKKKVERLTMQVSSLQREPFTVTQGKGQKLCEIERIHFFLSKKKPDELRNLHKLLYNRPGTVSSLKKNVGQFSGFPFEKGSTQYKKKEEMLKKFRNAMLKSICEVLDLERSGVNSELVKRILNFLMHPKPSGKPLPKSKKSSSKGSKKERNSSGTTRKSKQTKCPEILSDESSSDEDEKKNKEESSEDEEKESEEEQPPKKTSKKEKAKQKATAKSKKSVKSANVKKADSSTTKKNQKSSKKESESEDSSDDEPLIKKLKKPPTDEELKETVKKLLADANLEEVTMKQICKEVYENYPAYDLTERKDFIKTTVKELIS</sequence>
<comment type="function">
    <text evidence="6">Involved in chromatin organization.</text>
</comment>
<comment type="subunit">
    <text evidence="1">Found in a mRNA splicing-dependent exon junction complex (EJC) with DEK, RBM8A, RNPS1, SRRM1 and ALYREF/THOC4. Interacts with histones H2A, H2B, H3, H4, acetylated histone H4, non-phosphorylated DAXX and HDAC2. Component of the B-WICH complex, at least composed of SMARCA5/SNF2H, BAZ1B/WSTF, SF3B1, DEK, MYO1C, ERCC6, MYBBP1A and DDX21. Binds DNA (By similarity).</text>
</comment>
<comment type="subcellular location">
    <subcellularLocation>
        <location evidence="6">Nucleus</location>
    </subcellularLocation>
    <text evidence="1">Enriched in regions where chromatin is decondensed or sparse in the interphase nuclei.</text>
</comment>
<comment type="PTM">
    <text evidence="1">Phosphorylated by CK2. Phosphorylation fluctuates during the cell cycle with a moderate peak during G(1) phase, and weakens the binding of DEK to DNA (By similarity).</text>
</comment>